<comment type="function">
    <text evidence="1">Endonuclease that specifically degrades the RNA of RNA-DNA hybrids.</text>
</comment>
<comment type="catalytic activity">
    <reaction evidence="1">
        <text>Endonucleolytic cleavage to 5'-phosphomonoester.</text>
        <dbReference type="EC" id="3.1.26.4"/>
    </reaction>
</comment>
<comment type="cofactor">
    <cofactor evidence="1">
        <name>Mn(2+)</name>
        <dbReference type="ChEBI" id="CHEBI:29035"/>
    </cofactor>
    <cofactor evidence="1">
        <name>Mg(2+)</name>
        <dbReference type="ChEBI" id="CHEBI:18420"/>
    </cofactor>
    <text evidence="1">Manganese or magnesium. Binds 1 divalent metal ion per monomer in the absence of substrate. May bind a second metal ion after substrate binding.</text>
</comment>
<comment type="subcellular location">
    <subcellularLocation>
        <location evidence="1">Cytoplasm</location>
    </subcellularLocation>
</comment>
<comment type="similarity">
    <text evidence="1">Belongs to the RNase HII family.</text>
</comment>
<gene>
    <name evidence="1" type="primary">rnhB</name>
    <name type="ordered locus">Mmcs_1972</name>
</gene>
<evidence type="ECO:0000255" key="1">
    <source>
        <dbReference type="HAMAP-Rule" id="MF_00052"/>
    </source>
</evidence>
<evidence type="ECO:0000255" key="2">
    <source>
        <dbReference type="PROSITE-ProRule" id="PRU01319"/>
    </source>
</evidence>
<reference key="1">
    <citation type="submission" date="2006-06" db="EMBL/GenBank/DDBJ databases">
        <title>Complete sequence of chromosome of Mycobacterium sp. MCS.</title>
        <authorList>
            <consortium name="US DOE Joint Genome Institute"/>
            <person name="Copeland A."/>
            <person name="Lucas S."/>
            <person name="Lapidus A."/>
            <person name="Barry K."/>
            <person name="Detter J.C."/>
            <person name="Glavina del Rio T."/>
            <person name="Hammon N."/>
            <person name="Israni S."/>
            <person name="Dalin E."/>
            <person name="Tice H."/>
            <person name="Pitluck S."/>
            <person name="Martinez M."/>
            <person name="Schmutz J."/>
            <person name="Larimer F."/>
            <person name="Land M."/>
            <person name="Hauser L."/>
            <person name="Kyrpides N."/>
            <person name="Kim E."/>
            <person name="Miller C.D."/>
            <person name="Hughes J.E."/>
            <person name="Anderson A.J."/>
            <person name="Sims R.C."/>
            <person name="Richardson P."/>
        </authorList>
    </citation>
    <scope>NUCLEOTIDE SEQUENCE [LARGE SCALE GENOMIC DNA]</scope>
    <source>
        <strain>MCS</strain>
    </source>
</reference>
<name>RNH2_MYCSS</name>
<keyword id="KW-0963">Cytoplasm</keyword>
<keyword id="KW-0255">Endonuclease</keyword>
<keyword id="KW-0378">Hydrolase</keyword>
<keyword id="KW-0464">Manganese</keyword>
<keyword id="KW-0479">Metal-binding</keyword>
<keyword id="KW-0540">Nuclease</keyword>
<sequence>MPASWPPRTVIRKASGLRTLESALYRNGLGPVAGVDEVGRGACAGPLVVAACVLGPNRLESLAALDDSKKLGEKERERLFPVIRRYALAYHVVFIPSEEVDRRGVHVANIEGMRRAVAGLSVRPGYVLSDGFRVPGLPMPSLPVVGGDAAAACIAAASVLAKVSRDRLMVAMEREHPGYGFAEHKGYSTPAHTAALAELGPCAQHRYSFINVRRLVTAGTPQISGGLTDAEPGQCCELG</sequence>
<protein>
    <recommendedName>
        <fullName evidence="1">Ribonuclease HII</fullName>
        <shortName evidence="1">RNase HII</shortName>
        <ecNumber evidence="1">3.1.26.4</ecNumber>
    </recommendedName>
</protein>
<accession>Q1BAK3</accession>
<proteinExistence type="inferred from homology"/>
<feature type="chain" id="PRO_1000031167" description="Ribonuclease HII">
    <location>
        <begin position="1"/>
        <end position="239"/>
    </location>
</feature>
<feature type="domain" description="RNase H type-2" evidence="2">
    <location>
        <begin position="30"/>
        <end position="221"/>
    </location>
</feature>
<feature type="binding site" evidence="1">
    <location>
        <position position="36"/>
    </location>
    <ligand>
        <name>a divalent metal cation</name>
        <dbReference type="ChEBI" id="CHEBI:60240"/>
    </ligand>
</feature>
<feature type="binding site" evidence="1">
    <location>
        <position position="37"/>
    </location>
    <ligand>
        <name>a divalent metal cation</name>
        <dbReference type="ChEBI" id="CHEBI:60240"/>
    </ligand>
</feature>
<feature type="binding site" evidence="1">
    <location>
        <position position="130"/>
    </location>
    <ligand>
        <name>a divalent metal cation</name>
        <dbReference type="ChEBI" id="CHEBI:60240"/>
    </ligand>
</feature>
<dbReference type="EC" id="3.1.26.4" evidence="1"/>
<dbReference type="EMBL" id="CP000384">
    <property type="protein sequence ID" value="ABG08081.1"/>
    <property type="molecule type" value="Genomic_DNA"/>
</dbReference>
<dbReference type="SMR" id="Q1BAK3"/>
<dbReference type="KEGG" id="mmc:Mmcs_1972"/>
<dbReference type="HOGENOM" id="CLU_036532_1_0_11"/>
<dbReference type="BioCyc" id="MSP164756:G1G6O-2017-MONOMER"/>
<dbReference type="GO" id="GO:0005737">
    <property type="term" value="C:cytoplasm"/>
    <property type="evidence" value="ECO:0007669"/>
    <property type="project" value="UniProtKB-SubCell"/>
</dbReference>
<dbReference type="GO" id="GO:0032299">
    <property type="term" value="C:ribonuclease H2 complex"/>
    <property type="evidence" value="ECO:0007669"/>
    <property type="project" value="TreeGrafter"/>
</dbReference>
<dbReference type="GO" id="GO:0030145">
    <property type="term" value="F:manganese ion binding"/>
    <property type="evidence" value="ECO:0007669"/>
    <property type="project" value="UniProtKB-UniRule"/>
</dbReference>
<dbReference type="GO" id="GO:0003723">
    <property type="term" value="F:RNA binding"/>
    <property type="evidence" value="ECO:0007669"/>
    <property type="project" value="InterPro"/>
</dbReference>
<dbReference type="GO" id="GO:0004523">
    <property type="term" value="F:RNA-DNA hybrid ribonuclease activity"/>
    <property type="evidence" value="ECO:0007669"/>
    <property type="project" value="UniProtKB-UniRule"/>
</dbReference>
<dbReference type="GO" id="GO:0043137">
    <property type="term" value="P:DNA replication, removal of RNA primer"/>
    <property type="evidence" value="ECO:0007669"/>
    <property type="project" value="TreeGrafter"/>
</dbReference>
<dbReference type="GO" id="GO:0006298">
    <property type="term" value="P:mismatch repair"/>
    <property type="evidence" value="ECO:0007669"/>
    <property type="project" value="TreeGrafter"/>
</dbReference>
<dbReference type="CDD" id="cd07182">
    <property type="entry name" value="RNase_HII_bacteria_HII_like"/>
    <property type="match status" value="1"/>
</dbReference>
<dbReference type="FunFam" id="3.30.420.10:FF:000113">
    <property type="entry name" value="Ribonuclease HII"/>
    <property type="match status" value="1"/>
</dbReference>
<dbReference type="Gene3D" id="3.30.420.10">
    <property type="entry name" value="Ribonuclease H-like superfamily/Ribonuclease H"/>
    <property type="match status" value="1"/>
</dbReference>
<dbReference type="HAMAP" id="MF_00052_B">
    <property type="entry name" value="RNase_HII_B"/>
    <property type="match status" value="1"/>
</dbReference>
<dbReference type="InterPro" id="IPR022898">
    <property type="entry name" value="RNase_HII"/>
</dbReference>
<dbReference type="InterPro" id="IPR001352">
    <property type="entry name" value="RNase_HII/HIII"/>
</dbReference>
<dbReference type="InterPro" id="IPR024567">
    <property type="entry name" value="RNase_HII/HIII_dom"/>
</dbReference>
<dbReference type="InterPro" id="IPR012337">
    <property type="entry name" value="RNaseH-like_sf"/>
</dbReference>
<dbReference type="InterPro" id="IPR036397">
    <property type="entry name" value="RNaseH_sf"/>
</dbReference>
<dbReference type="NCBIfam" id="NF000595">
    <property type="entry name" value="PRK00015.1-3"/>
    <property type="match status" value="1"/>
</dbReference>
<dbReference type="NCBIfam" id="NF000598">
    <property type="entry name" value="PRK00015.2-2"/>
    <property type="match status" value="1"/>
</dbReference>
<dbReference type="NCBIfam" id="NF000600">
    <property type="entry name" value="PRK00015.2-4"/>
    <property type="match status" value="1"/>
</dbReference>
<dbReference type="PANTHER" id="PTHR10954">
    <property type="entry name" value="RIBONUCLEASE H2 SUBUNIT A"/>
    <property type="match status" value="1"/>
</dbReference>
<dbReference type="PANTHER" id="PTHR10954:SF18">
    <property type="entry name" value="RIBONUCLEASE HII"/>
    <property type="match status" value="1"/>
</dbReference>
<dbReference type="Pfam" id="PF01351">
    <property type="entry name" value="RNase_HII"/>
    <property type="match status" value="1"/>
</dbReference>
<dbReference type="SUPFAM" id="SSF53098">
    <property type="entry name" value="Ribonuclease H-like"/>
    <property type="match status" value="1"/>
</dbReference>
<dbReference type="PROSITE" id="PS51975">
    <property type="entry name" value="RNASE_H_2"/>
    <property type="match status" value="1"/>
</dbReference>
<organism>
    <name type="scientific">Mycobacterium sp. (strain MCS)</name>
    <dbReference type="NCBI Taxonomy" id="164756"/>
    <lineage>
        <taxon>Bacteria</taxon>
        <taxon>Bacillati</taxon>
        <taxon>Actinomycetota</taxon>
        <taxon>Actinomycetes</taxon>
        <taxon>Mycobacteriales</taxon>
        <taxon>Mycobacteriaceae</taxon>
        <taxon>Mycobacterium</taxon>
    </lineage>
</organism>